<dbReference type="EC" id="1.14.13.-" evidence="5"/>
<dbReference type="EMBL" id="KV878980">
    <property type="protein sequence ID" value="OJJ98492.1"/>
    <property type="molecule type" value="Genomic_DNA"/>
</dbReference>
<dbReference type="RefSeq" id="XP_020054832.1">
    <property type="nucleotide sequence ID" value="XM_020196521.1"/>
</dbReference>
<dbReference type="SMR" id="A0A1L9WQQ1"/>
<dbReference type="STRING" id="690307.A0A1L9WQQ1"/>
<dbReference type="GeneID" id="30970335"/>
<dbReference type="VEuPathDB" id="FungiDB:ASPACDRAFT_122285"/>
<dbReference type="OMA" id="VKKDCAF"/>
<dbReference type="OrthoDB" id="66881at2759"/>
<dbReference type="Proteomes" id="UP000184546">
    <property type="component" value="Unassembled WGS sequence"/>
</dbReference>
<dbReference type="GO" id="GO:0050660">
    <property type="term" value="F:flavin adenine dinucleotide binding"/>
    <property type="evidence" value="ECO:0007669"/>
    <property type="project" value="InterPro"/>
</dbReference>
<dbReference type="GO" id="GO:0004499">
    <property type="term" value="F:N,N-dimethylaniline monooxygenase activity"/>
    <property type="evidence" value="ECO:0007669"/>
    <property type="project" value="InterPro"/>
</dbReference>
<dbReference type="GO" id="GO:0050661">
    <property type="term" value="F:NADP binding"/>
    <property type="evidence" value="ECO:0007669"/>
    <property type="project" value="InterPro"/>
</dbReference>
<dbReference type="Gene3D" id="3.50.50.60">
    <property type="entry name" value="FAD/NAD(P)-binding domain"/>
    <property type="match status" value="2"/>
</dbReference>
<dbReference type="InterPro" id="IPR050775">
    <property type="entry name" value="FAD-binding_Monooxygenases"/>
</dbReference>
<dbReference type="InterPro" id="IPR036188">
    <property type="entry name" value="FAD/NAD-bd_sf"/>
</dbReference>
<dbReference type="InterPro" id="IPR020946">
    <property type="entry name" value="Flavin_mOase-like"/>
</dbReference>
<dbReference type="PANTHER" id="PTHR43098">
    <property type="entry name" value="L-ORNITHINE N(5)-MONOOXYGENASE-RELATED"/>
    <property type="match status" value="1"/>
</dbReference>
<dbReference type="PANTHER" id="PTHR43098:SF3">
    <property type="entry name" value="L-ORNITHINE N(5)-MONOOXYGENASE-RELATED"/>
    <property type="match status" value="1"/>
</dbReference>
<dbReference type="Pfam" id="PF00743">
    <property type="entry name" value="FMO-like"/>
    <property type="match status" value="1"/>
</dbReference>
<dbReference type="SUPFAM" id="SSF51905">
    <property type="entry name" value="FAD/NAD(P)-binding domain"/>
    <property type="match status" value="1"/>
</dbReference>
<sequence length="593" mass="66932">MHRELKEFSHPHGSTGIYEDNLQVDVLIVGAGFSGIYMLHELRKQGLKTVVYEAGSDLGGTWRFNCYPGARVDSQVPLYQFSIPETYKDWTWSTNYPDYKELRAYFDHVDKVLDIKKDVAFGSVVVDAQFDTSQSRWVVKTQDGRTAYAKYFIAAAGVSSKRYIPEWEGIENFKGPIHHTSFWPEHEVDVRGKRAAIIGTGASGVQVTQAWGPQAGHLKVFLRSPNYSIPMRRKELTADEQNQLKPIYPQLFDLREKTFTGALVDFSERSALEDSEAEREAFYEQRYQTGGFDFSTANYKDTMLNPVANRYLYDFWAKKTRARLNDERVKDLLAPVEPPYFFGGKRSSLETDFYEQFNRDTVELVDAKSNPIVGFTENGIKMQDGTVHEVDVVCLATGFDTTTGSMINLGVRSIHGTTLQEDWSQAAETYLGLTVSGYPNLFHLYGTHAPTLFSQAVTTIEVQGRWIVDAIKQMERQAIRSINPSREAAHAWKLQIRAFQNASFFPTVHSTYMGGSIPGKPFELVSYPAGMPMYARQIRDALPTFPGFEVVKADGEKVENLAPGGLEATTNFFERLFGMPPSSAKEDLAKQDH</sequence>
<keyword id="KW-0274">FAD</keyword>
<keyword id="KW-0285">Flavoprotein</keyword>
<keyword id="KW-0503">Monooxygenase</keyword>
<keyword id="KW-0521">NADP</keyword>
<keyword id="KW-0560">Oxidoreductase</keyword>
<keyword id="KW-1185">Reference proteome</keyword>
<evidence type="ECO:0000250" key="1">
    <source>
        <dbReference type="UniProtKB" id="H3JQW0"/>
    </source>
</evidence>
<evidence type="ECO:0000269" key="2">
    <source>
    </source>
</evidence>
<evidence type="ECO:0000303" key="3">
    <source>
    </source>
</evidence>
<evidence type="ECO:0000305" key="4"/>
<evidence type="ECO:0000305" key="5">
    <source>
    </source>
</evidence>
<proteinExistence type="evidence at transcript level"/>
<protein>
    <recommendedName>
        <fullName evidence="3">FAD-binding monooxygenase acrE</fullName>
        <ecNumber evidence="5">1.14.13.-</ecNumber>
    </recommendedName>
    <alternativeName>
        <fullName evidence="3">Acurin A biosynthesis cluster protein E</fullName>
    </alternativeName>
</protein>
<name>ACRE_ASPA1</name>
<accession>A0A1L9WQQ1</accession>
<organism>
    <name type="scientific">Aspergillus aculeatus (strain ATCC 16872 / CBS 172.66 / WB 5094)</name>
    <dbReference type="NCBI Taxonomy" id="690307"/>
    <lineage>
        <taxon>Eukaryota</taxon>
        <taxon>Fungi</taxon>
        <taxon>Dikarya</taxon>
        <taxon>Ascomycota</taxon>
        <taxon>Pezizomycotina</taxon>
        <taxon>Eurotiomycetes</taxon>
        <taxon>Eurotiomycetidae</taxon>
        <taxon>Eurotiales</taxon>
        <taxon>Aspergillaceae</taxon>
        <taxon>Aspergillus</taxon>
        <taxon>Aspergillus subgen. Circumdati</taxon>
    </lineage>
</organism>
<feature type="chain" id="PRO_0000450425" description="FAD-binding monooxygenase acrE">
    <location>
        <begin position="1"/>
        <end position="593"/>
    </location>
</feature>
<feature type="binding site" evidence="1">
    <location>
        <begin position="61"/>
        <end position="64"/>
    </location>
    <ligand>
        <name>FAD</name>
        <dbReference type="ChEBI" id="CHEBI:57692"/>
    </ligand>
</feature>
<feature type="binding site" evidence="1">
    <location>
        <begin position="71"/>
        <end position="73"/>
    </location>
    <ligand>
        <name>NADP(+)</name>
        <dbReference type="ChEBI" id="CHEBI:58349"/>
    </ligand>
</feature>
<feature type="binding site" evidence="1">
    <location>
        <begin position="73"/>
        <end position="74"/>
    </location>
    <ligand>
        <name>FAD</name>
        <dbReference type="ChEBI" id="CHEBI:57692"/>
    </ligand>
</feature>
<feature type="binding site" evidence="1">
    <location>
        <position position="79"/>
    </location>
    <ligand>
        <name>FAD</name>
        <dbReference type="ChEBI" id="CHEBI:57692"/>
    </ligand>
</feature>
<feature type="binding site" evidence="1">
    <location>
        <begin position="200"/>
        <end position="206"/>
    </location>
    <ligand>
        <name>NADP(+)</name>
        <dbReference type="ChEBI" id="CHEBI:58349"/>
    </ligand>
</feature>
<feature type="binding site" evidence="1">
    <location>
        <begin position="223"/>
        <end position="224"/>
    </location>
    <ligand>
        <name>NADP(+)</name>
        <dbReference type="ChEBI" id="CHEBI:58349"/>
    </ligand>
</feature>
<feature type="site" description="Transition state stabilizer" evidence="1">
    <location>
        <position position="346"/>
    </location>
</feature>
<gene>
    <name evidence="3" type="primary">acrE</name>
    <name type="ORF">ASPACDRAFT_122285</name>
</gene>
<comment type="function">
    <text evidence="2 5">FAD-binding monooxygenase; part of the cluster that mediates the biosynthesis of acurin A, a highly reduced polyketide coupled to a serine via a peptide bond (PubMed:32234543). The activities of the highly reducing polyketide synthase acrA and the nonribosomal peptide synthetase acrB are collectively responsible for the synthesis of the acurin A core structure with a heptaketide backbone produced by acrA covalently fused to a L-serine by acrB (PubMed:32234543). After the formation of the PK-NRP hybrid product, it is detached from acrB by reductive release to set up the formation of the lactam ring by aldol condensation (Probable). The hydrolyase acrC then catalyzes water loss to generate a double bond in the ring (Probable). This double bond is probably reduced, which is followed by three oxidations at C-22 to generate the carboxylic acid moiety, involving probably the FAD-binding monooxygenase acrE and the cytochrome P450 monooxygenases acrD and acrF (Probable). Finally, a last methylation step performed by the O-methyltransferase acrG leads to the production of acurin A (Probable).</text>
</comment>
<comment type="cofactor">
    <cofactor evidence="1">
        <name>FAD</name>
        <dbReference type="ChEBI" id="CHEBI:57692"/>
    </cofactor>
    <text evidence="1">Binds 1 FAD per subunit.</text>
</comment>
<comment type="pathway">
    <text evidence="2">Secondary metabolite biosynthesis.</text>
</comment>
<comment type="induction">
    <text evidence="2">Expression is positively regulated by the acurin A cluster-specific transcription regulator acrR.</text>
</comment>
<comment type="disruption phenotype">
    <text evidence="2">Abolishes the production of acurin A.</text>
</comment>
<comment type="similarity">
    <text evidence="4">Belongs to the FAD-binding monooxygenase family.</text>
</comment>
<reference key="1">
    <citation type="journal article" date="2017" name="Genome Biol.">
        <title>Comparative genomics reveals high biological diversity and specific adaptations in the industrially and medically important fungal genus Aspergillus.</title>
        <authorList>
            <person name="de Vries R.P."/>
            <person name="Riley R."/>
            <person name="Wiebenga A."/>
            <person name="Aguilar-Osorio G."/>
            <person name="Amillis S."/>
            <person name="Uchima C.A."/>
            <person name="Anderluh G."/>
            <person name="Asadollahi M."/>
            <person name="Askin M."/>
            <person name="Barry K."/>
            <person name="Battaglia E."/>
            <person name="Bayram O."/>
            <person name="Benocci T."/>
            <person name="Braus-Stromeyer S.A."/>
            <person name="Caldana C."/>
            <person name="Canovas D."/>
            <person name="Cerqueira G.C."/>
            <person name="Chen F."/>
            <person name="Chen W."/>
            <person name="Choi C."/>
            <person name="Clum A."/>
            <person name="Dos Santos R.A."/>
            <person name="Damasio A.R."/>
            <person name="Diallinas G."/>
            <person name="Emri T."/>
            <person name="Fekete E."/>
            <person name="Flipphi M."/>
            <person name="Freyberg S."/>
            <person name="Gallo A."/>
            <person name="Gournas C."/>
            <person name="Habgood R."/>
            <person name="Hainaut M."/>
            <person name="Harispe M.L."/>
            <person name="Henrissat B."/>
            <person name="Hilden K.S."/>
            <person name="Hope R."/>
            <person name="Hossain A."/>
            <person name="Karabika E."/>
            <person name="Karaffa L."/>
            <person name="Karanyi Z."/>
            <person name="Krasevec N."/>
            <person name="Kuo A."/>
            <person name="Kusch H."/>
            <person name="LaButti K."/>
            <person name="Lagendijk E.L."/>
            <person name="Lapidus A."/>
            <person name="Levasseur A."/>
            <person name="Lindquist E."/>
            <person name="Lipzen A."/>
            <person name="Logrieco A.F."/>
            <person name="MacCabe A."/>
            <person name="Maekelae M.R."/>
            <person name="Malavazi I."/>
            <person name="Melin P."/>
            <person name="Meyer V."/>
            <person name="Mielnichuk N."/>
            <person name="Miskei M."/>
            <person name="Molnar A.P."/>
            <person name="Mule G."/>
            <person name="Ngan C.Y."/>
            <person name="Orejas M."/>
            <person name="Orosz E."/>
            <person name="Ouedraogo J.P."/>
            <person name="Overkamp K.M."/>
            <person name="Park H.-S."/>
            <person name="Perrone G."/>
            <person name="Piumi F."/>
            <person name="Punt P.J."/>
            <person name="Ram A.F."/>
            <person name="Ramon A."/>
            <person name="Rauscher S."/>
            <person name="Record E."/>
            <person name="Riano-Pachon D.M."/>
            <person name="Robert V."/>
            <person name="Roehrig J."/>
            <person name="Ruller R."/>
            <person name="Salamov A."/>
            <person name="Salih N.S."/>
            <person name="Samson R.A."/>
            <person name="Sandor E."/>
            <person name="Sanguinetti M."/>
            <person name="Schuetze T."/>
            <person name="Sepcic K."/>
            <person name="Shelest E."/>
            <person name="Sherlock G."/>
            <person name="Sophianopoulou V."/>
            <person name="Squina F.M."/>
            <person name="Sun H."/>
            <person name="Susca A."/>
            <person name="Todd R.B."/>
            <person name="Tsang A."/>
            <person name="Unkles S.E."/>
            <person name="van de Wiele N."/>
            <person name="van Rossen-Uffink D."/>
            <person name="Oliveira J.V."/>
            <person name="Vesth T.C."/>
            <person name="Visser J."/>
            <person name="Yu J.-H."/>
            <person name="Zhou M."/>
            <person name="Andersen M.R."/>
            <person name="Archer D.B."/>
            <person name="Baker S.E."/>
            <person name="Benoit I."/>
            <person name="Brakhage A.A."/>
            <person name="Braus G.H."/>
            <person name="Fischer R."/>
            <person name="Frisvad J.C."/>
            <person name="Goldman G.H."/>
            <person name="Houbraken J."/>
            <person name="Oakley B."/>
            <person name="Pocsi I."/>
            <person name="Scazzocchio C."/>
            <person name="Seiboth B."/>
            <person name="vanKuyk P.A."/>
            <person name="Wortman J."/>
            <person name="Dyer P.S."/>
            <person name="Grigoriev I.V."/>
        </authorList>
    </citation>
    <scope>NUCLEOTIDE SEQUENCE [LARGE SCALE GENOMIC DNA]</scope>
    <source>
        <strain>ATCC 16872 / CBS 172.66 / WB 5094</strain>
    </source>
</reference>
<reference key="2">
    <citation type="journal article" date="2020" name="Fungal Genet. Biol.">
        <title>Acurin A, a novel hybrid compound, biosynthesized by individually translated PKS- and NRPS-encoding genes in Aspergillus aculeatus.</title>
        <authorList>
            <person name="Wolff P.B."/>
            <person name="Nielsen M.L."/>
            <person name="Slot J.C."/>
            <person name="Andersen L.N."/>
            <person name="Petersen L.M."/>
            <person name="Isbrandt T."/>
            <person name="Holm D.K."/>
            <person name="Mortensen U.H."/>
            <person name="Noedvig C.S."/>
            <person name="Larsen T.O."/>
            <person name="Hoof J.B."/>
        </authorList>
    </citation>
    <scope>FUNCTION</scope>
    <scope>DISRUPTION PHENOTYPE</scope>
    <scope>PATHWAY</scope>
    <scope>INDUCTION</scope>
</reference>